<name>YIDC_GEOUR</name>
<feature type="chain" id="PRO_1000088254" description="Membrane protein insertase YidC">
    <location>
        <begin position="1"/>
        <end position="528"/>
    </location>
</feature>
<feature type="transmembrane region" description="Helical" evidence="1">
    <location>
        <begin position="5"/>
        <end position="25"/>
    </location>
</feature>
<feature type="transmembrane region" description="Helical" evidence="1">
    <location>
        <begin position="346"/>
        <end position="366"/>
    </location>
</feature>
<feature type="transmembrane region" description="Helical" evidence="1">
    <location>
        <begin position="416"/>
        <end position="436"/>
    </location>
</feature>
<feature type="transmembrane region" description="Helical" evidence="1">
    <location>
        <begin position="486"/>
        <end position="506"/>
    </location>
</feature>
<gene>
    <name evidence="1" type="primary">yidC</name>
    <name type="ordered locus">Gura_4429</name>
</gene>
<keyword id="KW-0997">Cell inner membrane</keyword>
<keyword id="KW-1003">Cell membrane</keyword>
<keyword id="KW-0143">Chaperone</keyword>
<keyword id="KW-0472">Membrane</keyword>
<keyword id="KW-0653">Protein transport</keyword>
<keyword id="KW-1185">Reference proteome</keyword>
<keyword id="KW-0812">Transmembrane</keyword>
<keyword id="KW-1133">Transmembrane helix</keyword>
<keyword id="KW-0813">Transport</keyword>
<comment type="function">
    <text evidence="1">Required for the insertion and/or proper folding and/or complex formation of integral membrane proteins into the membrane. Involved in integration of membrane proteins that insert both dependently and independently of the Sec translocase complex, as well as at least some lipoproteins. Aids folding of multispanning membrane proteins.</text>
</comment>
<comment type="subunit">
    <text evidence="1">Interacts with the Sec translocase complex via SecD. Specifically interacts with transmembrane segments of nascent integral membrane proteins during membrane integration.</text>
</comment>
<comment type="subcellular location">
    <subcellularLocation>
        <location evidence="1">Cell inner membrane</location>
        <topology evidence="1">Multi-pass membrane protein</topology>
    </subcellularLocation>
</comment>
<comment type="similarity">
    <text evidence="1">Belongs to the OXA1/ALB3/YidC family. Type 1 subfamily.</text>
</comment>
<sequence length="528" mass="59054">MEKRVVIAVILSIAVLYAYSMIFPPPQKKDVVKPGPVPQSQTAPVQAVSSTSVLPAIMQQGNVSVRDLVVETDLFTAVFSTRGAGLKKLVLKRYKETSGPGGREVVLVNEEAAEKFSLLTEGKSFGIEPTVVYNSISNGLKLAGNEKGTLEFTSTSPTGIVFKKSYIFTGNDYRIDLHQELLNNSPTKFDGSLHLIGNNRIEAKPGDGRFEVYGPVTLADDKINTEKVADFSKGPKQYDKNILWTAFADKYFMNAILSDNNSIAAVRLAKVNTNYLQDDVSSPPLALNPGQSAAVNYRIFYGPKDLEILKGQGSRLEEAIDFGWFSALAKPLLRTLKFFYSYTHNYGIAIIIITVILKLLFFPLTHKSYKSMKEMQKLQPKMAELKEKFKNDRDAMNRAVMDLYKTHKVNPMGGCLPMIVQIPVFFALYKALMFSIELRHAPFMLWIMDLSAKDPYYVTPVIMGVTMFVQQKMTPSNMDPVQAKMMLALPVVFTFMFLNFPSGLVLYWLVNNILTIAQQTYINKSLPS</sequence>
<protein>
    <recommendedName>
        <fullName evidence="1">Membrane protein insertase YidC</fullName>
    </recommendedName>
    <alternativeName>
        <fullName evidence="1">Foldase YidC</fullName>
    </alternativeName>
    <alternativeName>
        <fullName evidence="1">Membrane integrase YidC</fullName>
    </alternativeName>
    <alternativeName>
        <fullName evidence="1">Membrane protein YidC</fullName>
    </alternativeName>
</protein>
<accession>A5G9V4</accession>
<dbReference type="EMBL" id="CP000698">
    <property type="protein sequence ID" value="ABQ28572.1"/>
    <property type="molecule type" value="Genomic_DNA"/>
</dbReference>
<dbReference type="RefSeq" id="WP_011941198.1">
    <property type="nucleotide sequence ID" value="NC_009483.1"/>
</dbReference>
<dbReference type="SMR" id="A5G9V4"/>
<dbReference type="STRING" id="351605.Gura_4429"/>
<dbReference type="KEGG" id="gur:Gura_4429"/>
<dbReference type="HOGENOM" id="CLU_016535_3_0_7"/>
<dbReference type="OrthoDB" id="9780552at2"/>
<dbReference type="Proteomes" id="UP000006695">
    <property type="component" value="Chromosome"/>
</dbReference>
<dbReference type="GO" id="GO:0005886">
    <property type="term" value="C:plasma membrane"/>
    <property type="evidence" value="ECO:0007669"/>
    <property type="project" value="UniProtKB-SubCell"/>
</dbReference>
<dbReference type="GO" id="GO:0032977">
    <property type="term" value="F:membrane insertase activity"/>
    <property type="evidence" value="ECO:0007669"/>
    <property type="project" value="InterPro"/>
</dbReference>
<dbReference type="GO" id="GO:0051205">
    <property type="term" value="P:protein insertion into membrane"/>
    <property type="evidence" value="ECO:0007669"/>
    <property type="project" value="TreeGrafter"/>
</dbReference>
<dbReference type="GO" id="GO:0015031">
    <property type="term" value="P:protein transport"/>
    <property type="evidence" value="ECO:0007669"/>
    <property type="project" value="UniProtKB-KW"/>
</dbReference>
<dbReference type="CDD" id="cd20070">
    <property type="entry name" value="5TM_YidC_Alb3"/>
    <property type="match status" value="1"/>
</dbReference>
<dbReference type="CDD" id="cd19961">
    <property type="entry name" value="EcYidC-like_peri"/>
    <property type="match status" value="1"/>
</dbReference>
<dbReference type="Gene3D" id="2.70.98.90">
    <property type="match status" value="1"/>
</dbReference>
<dbReference type="HAMAP" id="MF_01810">
    <property type="entry name" value="YidC_type1"/>
    <property type="match status" value="1"/>
</dbReference>
<dbReference type="InterPro" id="IPR019998">
    <property type="entry name" value="Membr_insert_YidC"/>
</dbReference>
<dbReference type="InterPro" id="IPR028053">
    <property type="entry name" value="Membr_insert_YidC_N"/>
</dbReference>
<dbReference type="InterPro" id="IPR001708">
    <property type="entry name" value="YidC/ALB3/OXA1/COX18"/>
</dbReference>
<dbReference type="InterPro" id="IPR028055">
    <property type="entry name" value="YidC/Oxa/ALB_C"/>
</dbReference>
<dbReference type="InterPro" id="IPR047196">
    <property type="entry name" value="YidC_ALB_C"/>
</dbReference>
<dbReference type="InterPro" id="IPR038221">
    <property type="entry name" value="YidC_periplasmic_sf"/>
</dbReference>
<dbReference type="NCBIfam" id="NF002353">
    <property type="entry name" value="PRK01318.1-4"/>
    <property type="match status" value="1"/>
</dbReference>
<dbReference type="NCBIfam" id="TIGR03593">
    <property type="entry name" value="yidC_nterm"/>
    <property type="match status" value="1"/>
</dbReference>
<dbReference type="NCBIfam" id="TIGR03592">
    <property type="entry name" value="yidC_oxa1_cterm"/>
    <property type="match status" value="1"/>
</dbReference>
<dbReference type="PANTHER" id="PTHR12428:SF65">
    <property type="entry name" value="CYTOCHROME C OXIDASE ASSEMBLY PROTEIN COX18, MITOCHONDRIAL"/>
    <property type="match status" value="1"/>
</dbReference>
<dbReference type="PANTHER" id="PTHR12428">
    <property type="entry name" value="OXA1"/>
    <property type="match status" value="1"/>
</dbReference>
<dbReference type="Pfam" id="PF02096">
    <property type="entry name" value="60KD_IMP"/>
    <property type="match status" value="1"/>
</dbReference>
<dbReference type="Pfam" id="PF14849">
    <property type="entry name" value="YidC_periplas"/>
    <property type="match status" value="1"/>
</dbReference>
<dbReference type="PRINTS" id="PR00701">
    <property type="entry name" value="60KDINNERMP"/>
</dbReference>
<dbReference type="PRINTS" id="PR01900">
    <property type="entry name" value="YIDCPROTEIN"/>
</dbReference>
<proteinExistence type="inferred from homology"/>
<reference key="1">
    <citation type="submission" date="2007-05" db="EMBL/GenBank/DDBJ databases">
        <title>Complete sequence of Geobacter uraniireducens Rf4.</title>
        <authorList>
            <consortium name="US DOE Joint Genome Institute"/>
            <person name="Copeland A."/>
            <person name="Lucas S."/>
            <person name="Lapidus A."/>
            <person name="Barry K."/>
            <person name="Detter J.C."/>
            <person name="Glavina del Rio T."/>
            <person name="Hammon N."/>
            <person name="Israni S."/>
            <person name="Dalin E."/>
            <person name="Tice H."/>
            <person name="Pitluck S."/>
            <person name="Chertkov O."/>
            <person name="Brettin T."/>
            <person name="Bruce D."/>
            <person name="Han C."/>
            <person name="Schmutz J."/>
            <person name="Larimer F."/>
            <person name="Land M."/>
            <person name="Hauser L."/>
            <person name="Kyrpides N."/>
            <person name="Mikhailova N."/>
            <person name="Shelobolina E."/>
            <person name="Aklujkar M."/>
            <person name="Lovley D."/>
            <person name="Richardson P."/>
        </authorList>
    </citation>
    <scope>NUCLEOTIDE SEQUENCE [LARGE SCALE GENOMIC DNA]</scope>
    <source>
        <strain>ATCC BAA-1134 / JCM 13001 / Rf4</strain>
    </source>
</reference>
<organism>
    <name type="scientific">Geotalea uraniireducens (strain Rf4)</name>
    <name type="common">Geobacter uraniireducens</name>
    <dbReference type="NCBI Taxonomy" id="351605"/>
    <lineage>
        <taxon>Bacteria</taxon>
        <taxon>Pseudomonadati</taxon>
        <taxon>Thermodesulfobacteriota</taxon>
        <taxon>Desulfuromonadia</taxon>
        <taxon>Geobacterales</taxon>
        <taxon>Geobacteraceae</taxon>
        <taxon>Geotalea</taxon>
    </lineage>
</organism>
<evidence type="ECO:0000255" key="1">
    <source>
        <dbReference type="HAMAP-Rule" id="MF_01810"/>
    </source>
</evidence>